<keyword id="KW-0413">Isomerase</keyword>
<keyword id="KW-0677">Repeat</keyword>
<proteinExistence type="evidence at protein level"/>
<feature type="chain" id="PRO_0000413997" description="Beta-amyrin synthase">
    <location>
        <begin position="1"/>
        <end position="779"/>
    </location>
</feature>
<feature type="repeat" description="PFTB 1">
    <location>
        <begin position="148"/>
        <end position="189"/>
    </location>
</feature>
<feature type="repeat" description="PFTB 2">
    <location>
        <begin position="514"/>
        <end position="556"/>
    </location>
</feature>
<feature type="repeat" description="PFTB 3">
    <location>
        <begin position="640"/>
        <end position="681"/>
    </location>
</feature>
<feature type="active site" description="Proton donor" evidence="1">
    <location>
        <position position="485"/>
    </location>
</feature>
<sequence>MWRLKIADGGSDPYIYSTNNFVGRQTWEFDPQAGSPQERAEVEEARRNFYDNRYQVKPSGDLLWRMQFLKEKNFKQTIPPVKVEDGEEITYEKSTAALRRAVHFYSALQASDGHWPAENAGPLFFLPPLVMCMYITGHLNTVFPAEHQKEILRYIYYHQNEDGGWGLHIEGHSTMFCTALSYICMRILGEGPDGGQDNACARARKWILDHGGVTHMPSWGKTWLSILGIFEWIGSNPMPPEFWILPSFLPMHPAKMWCYCRMVYMPMSYLYGKRFVGPITPLILQLREELYTQPYHQVNWKKVRHLCAKEDIYYPHPLIQDLLWDSLYIFTEPLLTRWPFNKLVREKALQVTMKHIHYEDENSRYITIGCVEKVLCMLACWVEDPNGDYFKKHIARIPDYIWVAEDGIKMQSFGSQEWDTGFAIQALLASNLTDEIGPTLARGHDFIKKSQVKDNPSGDFESMHRHISKGSWTFSDQDHGWQVSDCTAEGLKCCLLFSIMPPEIVGEKMEPEQLYDSVNVLLSLQSKNGGLAAWEPAGAQEWLELLNSTEFFADIVIEHEYIECTASAMQTLVLFKKLYPGHRKKEIENFIKNAAQFLQVIQMPDGSWYGNWGVCFTYGTWFALGGLAAVGKTYNNCLAVRRAVDFLLRAQRDNGGWGESYLSCPKKEYVPLEGNKSNLVHTAWAMMGLIHAGQAERDPTPLHRAAKLIINSQLEDGDFPQQEITGVFMKNCMLHYAAYKNIYPLWALAEYRKHVPLPLGKNLNQVVNCIGQSLYKKYK</sequence>
<accession>Q8W3Z1</accession>
<comment type="function">
    <text evidence="2">Oxidosqualene cyclase converting oxidosqualene into beta-amyrin, generating five rings and eight asymmetric centers in a single transformation.</text>
</comment>
<comment type="catalytic activity">
    <reaction evidence="2">
        <text>(S)-2,3-epoxysqualene = beta-amyrin</text>
        <dbReference type="Rhea" id="RHEA:31007"/>
        <dbReference type="ChEBI" id="CHEBI:10352"/>
        <dbReference type="ChEBI" id="CHEBI:15441"/>
        <dbReference type="EC" id="5.4.99.39"/>
    </reaction>
</comment>
<comment type="similarity">
    <text evidence="3">Belongs to the terpene cyclase/mutase family.</text>
</comment>
<organism>
    <name type="scientific">Betula platyphylla</name>
    <name type="common">Asian white birch</name>
    <dbReference type="NCBI Taxonomy" id="78630"/>
    <lineage>
        <taxon>Eukaryota</taxon>
        <taxon>Viridiplantae</taxon>
        <taxon>Streptophyta</taxon>
        <taxon>Embryophyta</taxon>
        <taxon>Tracheophyta</taxon>
        <taxon>Spermatophyta</taxon>
        <taxon>Magnoliopsida</taxon>
        <taxon>eudicotyledons</taxon>
        <taxon>Gunneridae</taxon>
        <taxon>Pentapetalae</taxon>
        <taxon>rosids</taxon>
        <taxon>fabids</taxon>
        <taxon>Fagales</taxon>
        <taxon>Betulaceae</taxon>
        <taxon>Betula</taxon>
    </lineage>
</organism>
<dbReference type="EC" id="5.4.99.39"/>
<dbReference type="EMBL" id="AB055512">
    <property type="protein sequence ID" value="BAB83088.1"/>
    <property type="molecule type" value="mRNA"/>
</dbReference>
<dbReference type="SMR" id="Q8W3Z1"/>
<dbReference type="KEGG" id="ag:BAB83088"/>
<dbReference type="BRENDA" id="5.4.99.39">
    <property type="organism ID" value="9789"/>
</dbReference>
<dbReference type="GO" id="GO:0005811">
    <property type="term" value="C:lipid droplet"/>
    <property type="evidence" value="ECO:0007669"/>
    <property type="project" value="InterPro"/>
</dbReference>
<dbReference type="GO" id="GO:0042300">
    <property type="term" value="F:beta-amyrin synthase activity"/>
    <property type="evidence" value="ECO:0000314"/>
    <property type="project" value="UniProtKB"/>
</dbReference>
<dbReference type="GO" id="GO:0019745">
    <property type="term" value="P:pentacyclic triterpenoid biosynthetic process"/>
    <property type="evidence" value="ECO:0000314"/>
    <property type="project" value="UniProtKB"/>
</dbReference>
<dbReference type="CDD" id="cd02892">
    <property type="entry name" value="SQCY_1"/>
    <property type="match status" value="1"/>
</dbReference>
<dbReference type="FunFam" id="1.50.10.20:FF:000011">
    <property type="entry name" value="Terpene cyclase/mutase family member"/>
    <property type="match status" value="1"/>
</dbReference>
<dbReference type="FunFam" id="1.50.10.20:FF:000064">
    <property type="entry name" value="Uncharacterized protein"/>
    <property type="match status" value="1"/>
</dbReference>
<dbReference type="Gene3D" id="1.50.10.20">
    <property type="match status" value="2"/>
</dbReference>
<dbReference type="InterPro" id="IPR032696">
    <property type="entry name" value="SQ_cyclase_C"/>
</dbReference>
<dbReference type="InterPro" id="IPR032697">
    <property type="entry name" value="SQ_cyclase_N"/>
</dbReference>
<dbReference type="InterPro" id="IPR018333">
    <property type="entry name" value="Squalene_cyclase"/>
</dbReference>
<dbReference type="InterPro" id="IPR002365">
    <property type="entry name" value="Terpene_synthase_CS"/>
</dbReference>
<dbReference type="InterPro" id="IPR008930">
    <property type="entry name" value="Terpenoid_cyclase/PrenylTrfase"/>
</dbReference>
<dbReference type="NCBIfam" id="TIGR01787">
    <property type="entry name" value="squalene_cyclas"/>
    <property type="match status" value="1"/>
</dbReference>
<dbReference type="PANTHER" id="PTHR11764:SF58">
    <property type="entry name" value="BETA-AMYRIN SYNTHASE-RELATED"/>
    <property type="match status" value="1"/>
</dbReference>
<dbReference type="PANTHER" id="PTHR11764">
    <property type="entry name" value="TERPENE CYCLASE/MUTASE FAMILY MEMBER"/>
    <property type="match status" value="1"/>
</dbReference>
<dbReference type="Pfam" id="PF13243">
    <property type="entry name" value="SQHop_cyclase_C"/>
    <property type="match status" value="1"/>
</dbReference>
<dbReference type="Pfam" id="PF13249">
    <property type="entry name" value="SQHop_cyclase_N"/>
    <property type="match status" value="1"/>
</dbReference>
<dbReference type="SFLD" id="SFLDG01016">
    <property type="entry name" value="Prenyltransferase_Like_2"/>
    <property type="match status" value="1"/>
</dbReference>
<dbReference type="SUPFAM" id="SSF48239">
    <property type="entry name" value="Terpenoid cyclases/Protein prenyltransferases"/>
    <property type="match status" value="2"/>
</dbReference>
<dbReference type="PROSITE" id="PS01074">
    <property type="entry name" value="TERPENE_SYNTHASES"/>
    <property type="match status" value="1"/>
</dbReference>
<reference key="1">
    <citation type="journal article" date="2003" name="Biol. Pharm. Bull.">
        <title>Oxidosqualene cyclases from cell suspension cultures of Betula platyphylla var. japonica: molecular evolution of oxidosqualene cyclases in higher plants.</title>
        <authorList>
            <person name="Zhang H."/>
            <person name="Shibuya M."/>
            <person name="Yokota S."/>
            <person name="Ebizuka Y."/>
        </authorList>
    </citation>
    <scope>NUCLEOTIDE SEQUENCE [MRNA]</scope>
    <scope>FUNCTION</scope>
    <scope>CATALYTIC ACTIVITY</scope>
</reference>
<gene>
    <name type="primary">OSCBPY</name>
</gene>
<name>BAMS_BETPL</name>
<evidence type="ECO:0000250" key="1">
    <source>
        <dbReference type="UniProtKB" id="P48449"/>
    </source>
</evidence>
<evidence type="ECO:0000269" key="2">
    <source>
    </source>
</evidence>
<evidence type="ECO:0000305" key="3"/>
<protein>
    <recommendedName>
        <fullName>Beta-amyrin synthase</fullName>
        <ecNumber>5.4.99.39</ecNumber>
    </recommendedName>
</protein>